<dbReference type="EC" id="6.1.1.11" evidence="1"/>
<dbReference type="EMBL" id="CP000479">
    <property type="protein sequence ID" value="ABK69523.1"/>
    <property type="molecule type" value="Genomic_DNA"/>
</dbReference>
<dbReference type="RefSeq" id="WP_009974433.1">
    <property type="nucleotide sequence ID" value="NC_008595.1"/>
</dbReference>
<dbReference type="SMR" id="A0Q999"/>
<dbReference type="KEGG" id="mav:MAV_0194"/>
<dbReference type="HOGENOM" id="CLU_023797_0_1_11"/>
<dbReference type="UniPathway" id="UPA00906">
    <property type="reaction ID" value="UER00895"/>
</dbReference>
<dbReference type="Proteomes" id="UP000001574">
    <property type="component" value="Chromosome"/>
</dbReference>
<dbReference type="GO" id="GO:0005737">
    <property type="term" value="C:cytoplasm"/>
    <property type="evidence" value="ECO:0007669"/>
    <property type="project" value="UniProtKB-SubCell"/>
</dbReference>
<dbReference type="GO" id="GO:0005524">
    <property type="term" value="F:ATP binding"/>
    <property type="evidence" value="ECO:0007669"/>
    <property type="project" value="UniProtKB-UniRule"/>
</dbReference>
<dbReference type="GO" id="GO:0004828">
    <property type="term" value="F:serine-tRNA ligase activity"/>
    <property type="evidence" value="ECO:0007669"/>
    <property type="project" value="UniProtKB-UniRule"/>
</dbReference>
<dbReference type="GO" id="GO:0016260">
    <property type="term" value="P:selenocysteine biosynthetic process"/>
    <property type="evidence" value="ECO:0007669"/>
    <property type="project" value="UniProtKB-UniRule"/>
</dbReference>
<dbReference type="GO" id="GO:0006434">
    <property type="term" value="P:seryl-tRNA aminoacylation"/>
    <property type="evidence" value="ECO:0007669"/>
    <property type="project" value="UniProtKB-UniRule"/>
</dbReference>
<dbReference type="CDD" id="cd00770">
    <property type="entry name" value="SerRS_core"/>
    <property type="match status" value="1"/>
</dbReference>
<dbReference type="FunFam" id="1.10.287.40:FF:000004">
    <property type="entry name" value="Serine--tRNA ligase"/>
    <property type="match status" value="1"/>
</dbReference>
<dbReference type="Gene3D" id="3.30.930.10">
    <property type="entry name" value="Bira Bifunctional Protein, Domain 2"/>
    <property type="match status" value="1"/>
</dbReference>
<dbReference type="Gene3D" id="1.10.287.40">
    <property type="entry name" value="Serine-tRNA synthetase, tRNA binding domain"/>
    <property type="match status" value="1"/>
</dbReference>
<dbReference type="HAMAP" id="MF_00176">
    <property type="entry name" value="Ser_tRNA_synth_type1"/>
    <property type="match status" value="1"/>
</dbReference>
<dbReference type="InterPro" id="IPR002314">
    <property type="entry name" value="aa-tRNA-synt_IIb"/>
</dbReference>
<dbReference type="InterPro" id="IPR006195">
    <property type="entry name" value="aa-tRNA-synth_II"/>
</dbReference>
<dbReference type="InterPro" id="IPR045864">
    <property type="entry name" value="aa-tRNA-synth_II/BPL/LPL"/>
</dbReference>
<dbReference type="InterPro" id="IPR002317">
    <property type="entry name" value="Ser-tRNA-ligase_type_1"/>
</dbReference>
<dbReference type="InterPro" id="IPR015866">
    <property type="entry name" value="Ser-tRNA-synth_1_N"/>
</dbReference>
<dbReference type="InterPro" id="IPR042103">
    <property type="entry name" value="SerRS_1_N_sf"/>
</dbReference>
<dbReference type="InterPro" id="IPR033729">
    <property type="entry name" value="SerRS_core"/>
</dbReference>
<dbReference type="InterPro" id="IPR010978">
    <property type="entry name" value="tRNA-bd_arm"/>
</dbReference>
<dbReference type="NCBIfam" id="TIGR00414">
    <property type="entry name" value="serS"/>
    <property type="match status" value="1"/>
</dbReference>
<dbReference type="PANTHER" id="PTHR11778">
    <property type="entry name" value="SERYL-TRNA SYNTHETASE"/>
    <property type="match status" value="1"/>
</dbReference>
<dbReference type="Pfam" id="PF02403">
    <property type="entry name" value="Seryl_tRNA_N"/>
    <property type="match status" value="1"/>
</dbReference>
<dbReference type="Pfam" id="PF00587">
    <property type="entry name" value="tRNA-synt_2b"/>
    <property type="match status" value="1"/>
</dbReference>
<dbReference type="PIRSF" id="PIRSF001529">
    <property type="entry name" value="Ser-tRNA-synth_IIa"/>
    <property type="match status" value="1"/>
</dbReference>
<dbReference type="PRINTS" id="PR00981">
    <property type="entry name" value="TRNASYNTHSER"/>
</dbReference>
<dbReference type="SUPFAM" id="SSF55681">
    <property type="entry name" value="Class II aaRS and biotin synthetases"/>
    <property type="match status" value="1"/>
</dbReference>
<dbReference type="SUPFAM" id="SSF46589">
    <property type="entry name" value="tRNA-binding arm"/>
    <property type="match status" value="1"/>
</dbReference>
<dbReference type="PROSITE" id="PS50862">
    <property type="entry name" value="AA_TRNA_LIGASE_II"/>
    <property type="match status" value="1"/>
</dbReference>
<protein>
    <recommendedName>
        <fullName evidence="1">Serine--tRNA ligase</fullName>
        <ecNumber evidence="1">6.1.1.11</ecNumber>
    </recommendedName>
    <alternativeName>
        <fullName evidence="1">Seryl-tRNA synthetase</fullName>
        <shortName evidence="1">SerRS</shortName>
    </alternativeName>
    <alternativeName>
        <fullName evidence="1">Seryl-tRNA(Ser/Sec) synthetase</fullName>
    </alternativeName>
</protein>
<reference key="1">
    <citation type="submission" date="2006-10" db="EMBL/GenBank/DDBJ databases">
        <authorList>
            <person name="Fleischmann R.D."/>
            <person name="Dodson R.J."/>
            <person name="Haft D.H."/>
            <person name="Merkel J.S."/>
            <person name="Nelson W.C."/>
            <person name="Fraser C.M."/>
        </authorList>
    </citation>
    <scope>NUCLEOTIDE SEQUENCE [LARGE SCALE GENOMIC DNA]</scope>
    <source>
        <strain>104</strain>
    </source>
</reference>
<organism>
    <name type="scientific">Mycobacterium avium (strain 104)</name>
    <dbReference type="NCBI Taxonomy" id="243243"/>
    <lineage>
        <taxon>Bacteria</taxon>
        <taxon>Bacillati</taxon>
        <taxon>Actinomycetota</taxon>
        <taxon>Actinomycetes</taxon>
        <taxon>Mycobacteriales</taxon>
        <taxon>Mycobacteriaceae</taxon>
        <taxon>Mycobacterium</taxon>
        <taxon>Mycobacterium avium complex (MAC)</taxon>
    </lineage>
</organism>
<feature type="chain" id="PRO_1000019734" description="Serine--tRNA ligase">
    <location>
        <begin position="1"/>
        <end position="425"/>
    </location>
</feature>
<feature type="binding site" evidence="1">
    <location>
        <begin position="226"/>
        <end position="228"/>
    </location>
    <ligand>
        <name>L-serine</name>
        <dbReference type="ChEBI" id="CHEBI:33384"/>
    </ligand>
</feature>
<feature type="binding site" evidence="1">
    <location>
        <begin position="257"/>
        <end position="259"/>
    </location>
    <ligand>
        <name>ATP</name>
        <dbReference type="ChEBI" id="CHEBI:30616"/>
    </ligand>
</feature>
<feature type="binding site" evidence="1">
    <location>
        <position position="273"/>
    </location>
    <ligand>
        <name>ATP</name>
        <dbReference type="ChEBI" id="CHEBI:30616"/>
    </ligand>
</feature>
<feature type="binding site" evidence="1">
    <location>
        <position position="280"/>
    </location>
    <ligand>
        <name>L-serine</name>
        <dbReference type="ChEBI" id="CHEBI:33384"/>
    </ligand>
</feature>
<feature type="binding site" evidence="1">
    <location>
        <begin position="344"/>
        <end position="347"/>
    </location>
    <ligand>
        <name>ATP</name>
        <dbReference type="ChEBI" id="CHEBI:30616"/>
    </ligand>
</feature>
<feature type="binding site" evidence="1">
    <location>
        <position position="382"/>
    </location>
    <ligand>
        <name>L-serine</name>
        <dbReference type="ChEBI" id="CHEBI:33384"/>
    </ligand>
</feature>
<accession>A0Q999</accession>
<comment type="function">
    <text evidence="1">Catalyzes the attachment of serine to tRNA(Ser). Is also able to aminoacylate tRNA(Sec) with serine, to form the misacylated tRNA L-seryl-tRNA(Sec), which will be further converted into selenocysteinyl-tRNA(Sec).</text>
</comment>
<comment type="catalytic activity">
    <reaction evidence="1">
        <text>tRNA(Ser) + L-serine + ATP = L-seryl-tRNA(Ser) + AMP + diphosphate + H(+)</text>
        <dbReference type="Rhea" id="RHEA:12292"/>
        <dbReference type="Rhea" id="RHEA-COMP:9669"/>
        <dbReference type="Rhea" id="RHEA-COMP:9703"/>
        <dbReference type="ChEBI" id="CHEBI:15378"/>
        <dbReference type="ChEBI" id="CHEBI:30616"/>
        <dbReference type="ChEBI" id="CHEBI:33019"/>
        <dbReference type="ChEBI" id="CHEBI:33384"/>
        <dbReference type="ChEBI" id="CHEBI:78442"/>
        <dbReference type="ChEBI" id="CHEBI:78533"/>
        <dbReference type="ChEBI" id="CHEBI:456215"/>
        <dbReference type="EC" id="6.1.1.11"/>
    </reaction>
</comment>
<comment type="catalytic activity">
    <reaction evidence="1">
        <text>tRNA(Sec) + L-serine + ATP = L-seryl-tRNA(Sec) + AMP + diphosphate + H(+)</text>
        <dbReference type="Rhea" id="RHEA:42580"/>
        <dbReference type="Rhea" id="RHEA-COMP:9742"/>
        <dbReference type="Rhea" id="RHEA-COMP:10128"/>
        <dbReference type="ChEBI" id="CHEBI:15378"/>
        <dbReference type="ChEBI" id="CHEBI:30616"/>
        <dbReference type="ChEBI" id="CHEBI:33019"/>
        <dbReference type="ChEBI" id="CHEBI:33384"/>
        <dbReference type="ChEBI" id="CHEBI:78442"/>
        <dbReference type="ChEBI" id="CHEBI:78533"/>
        <dbReference type="ChEBI" id="CHEBI:456215"/>
        <dbReference type="EC" id="6.1.1.11"/>
    </reaction>
</comment>
<comment type="pathway">
    <text evidence="1">Aminoacyl-tRNA biosynthesis; selenocysteinyl-tRNA(Sec) biosynthesis; L-seryl-tRNA(Sec) from L-serine and tRNA(Sec): step 1/1.</text>
</comment>
<comment type="subunit">
    <text evidence="1">Homodimer. The tRNA molecule binds across the dimer.</text>
</comment>
<comment type="subcellular location">
    <subcellularLocation>
        <location evidence="1">Cytoplasm</location>
    </subcellularLocation>
</comment>
<comment type="domain">
    <text evidence="1">Consists of two distinct domains, a catalytic core and a N-terminal extension that is involved in tRNA binding.</text>
</comment>
<comment type="similarity">
    <text evidence="1">Belongs to the class-II aminoacyl-tRNA synthetase family. Type-1 seryl-tRNA synthetase subfamily.</text>
</comment>
<name>SYS_MYCA1</name>
<proteinExistence type="inferred from homology"/>
<gene>
    <name evidence="1" type="primary">serS</name>
    <name type="ordered locus">MAV_0194</name>
</gene>
<keyword id="KW-0030">Aminoacyl-tRNA synthetase</keyword>
<keyword id="KW-0067">ATP-binding</keyword>
<keyword id="KW-0963">Cytoplasm</keyword>
<keyword id="KW-0436">Ligase</keyword>
<keyword id="KW-0547">Nucleotide-binding</keyword>
<keyword id="KW-0648">Protein biosynthesis</keyword>
<evidence type="ECO:0000255" key="1">
    <source>
        <dbReference type="HAMAP-Rule" id="MF_00176"/>
    </source>
</evidence>
<sequence length="425" mass="45755">MIDLKLLREDPDAVRRSQQSRGEDPSLVDALLAADAARRAAISTADTLRAEQKSASKSVGAASPEQRPALLARAKELAEQVKAAETAQAEAEAAFTAAHLAISNVVIDGVPAGGEDDFAVLDVVGEPTALENPRDHLELGESLGLIDMARGAKVSGSRFYFLTGKGALLQLGLLQLALRLAVENGFVPMIPPVLVRPEVMAGTGFLGAHAEEVYRIEADDLYLVGTSEVPLAGYHADEILDLSAGPLRYAGWSSCFRREAGSYGKDTRGVIRVHQFDKVEGFVYCTPADAEAEHQRLLGWQREMLARIEVPYRVIDVAAGDLGSSAARKFDCEAWVPTQQTYRELTSTSNCTTFQARRLSTRYRDGGDAKGKPQIAATLNGTLGTTRWLVAILENHQRPDGSVRVPEALVPFVGTELLEPVGPRG</sequence>